<protein>
    <recommendedName>
        <fullName>Fucoxanthin-chlorophyll a-c binding protein B, chloroplastic</fullName>
    </recommendedName>
</protein>
<accession>Q40296</accession>
<sequence>MKSAVMAVACAAAPGFRGPSAFNGAALTTSAKACSAMKMSFESEIGAQAPLGFWDPLGLLADADQERFERLRYVEVKHGRIAMLAIAGHLTQQNTRLPGMLSNSANLSFADMPNGVAALSKIPPAGLAQIFAFIGFLELAVMKNVEGSFPGDFTLGGNPFGASWDAMSEETQASKRAIELNNGRAAQMGILALMVHEELNNKPYVINDLVGASYTFN</sequence>
<feature type="transit peptide" description="Chloroplast" evidence="2">
    <location>
        <begin position="1"/>
        <end position="39"/>
    </location>
</feature>
<feature type="chain" id="PRO_0000021235" description="Fucoxanthin-chlorophyll a-c binding protein B, chloroplastic">
    <location>
        <begin position="40"/>
        <end position="217"/>
    </location>
</feature>
<feature type="transmembrane region" description="Helical" evidence="1">
    <location>
        <begin position="81"/>
        <end position="101"/>
    </location>
</feature>
<feature type="transmembrane region" description="Helical" evidence="1">
    <location>
        <begin position="122"/>
        <end position="142"/>
    </location>
</feature>
<feature type="transmembrane region" description="Helical" evidence="1">
    <location>
        <begin position="183"/>
        <end position="203"/>
    </location>
</feature>
<reference key="1">
    <citation type="journal article" date="1995" name="Mol. Gen. Genet.">
        <title>The gene family encoding the fucoxanthin chlorophyll proteins from the brown alga Macrocystis pyrifera.</title>
        <authorList>
            <person name="Apt K.E."/>
            <person name="Clendennen S.K."/>
            <person name="Powers D.A."/>
            <person name="Grossman A.R."/>
        </authorList>
    </citation>
    <scope>NUCLEOTIDE SEQUENCE [MRNA]</scope>
    <source>
        <strain>MAL-1</strain>
    </source>
</reference>
<dbReference type="EMBL" id="U10064">
    <property type="protein sequence ID" value="AAC49017.1"/>
    <property type="molecule type" value="mRNA"/>
</dbReference>
<dbReference type="PIR" id="S53819">
    <property type="entry name" value="S53819"/>
</dbReference>
<dbReference type="SMR" id="Q40296"/>
<dbReference type="GO" id="GO:0009535">
    <property type="term" value="C:chloroplast thylakoid membrane"/>
    <property type="evidence" value="ECO:0007669"/>
    <property type="project" value="UniProtKB-SubCell"/>
</dbReference>
<dbReference type="GO" id="GO:0030076">
    <property type="term" value="C:light-harvesting complex"/>
    <property type="evidence" value="ECO:0007669"/>
    <property type="project" value="UniProtKB-KW"/>
</dbReference>
<dbReference type="GO" id="GO:0009523">
    <property type="term" value="C:photosystem II"/>
    <property type="evidence" value="ECO:0007669"/>
    <property type="project" value="UniProtKB-KW"/>
</dbReference>
<dbReference type="GO" id="GO:0016168">
    <property type="term" value="F:chlorophyll binding"/>
    <property type="evidence" value="ECO:0007669"/>
    <property type="project" value="UniProtKB-KW"/>
</dbReference>
<dbReference type="GO" id="GO:0009765">
    <property type="term" value="P:photosynthesis, light harvesting"/>
    <property type="evidence" value="ECO:0007669"/>
    <property type="project" value="InterPro"/>
</dbReference>
<dbReference type="FunFam" id="1.10.3460.10:FF:000011">
    <property type="entry name" value="Fucoxanthin chlorophyll a/c protein 8"/>
    <property type="match status" value="1"/>
</dbReference>
<dbReference type="Gene3D" id="1.10.3460.10">
    <property type="entry name" value="Chlorophyll a/b binding protein domain"/>
    <property type="match status" value="1"/>
</dbReference>
<dbReference type="InterPro" id="IPR001344">
    <property type="entry name" value="Chloro_AB-bd_pln"/>
</dbReference>
<dbReference type="InterPro" id="IPR022796">
    <property type="entry name" value="Chloroa_b-bind"/>
</dbReference>
<dbReference type="PANTHER" id="PTHR21649">
    <property type="entry name" value="CHLOROPHYLL A/B BINDING PROTEIN"/>
    <property type="match status" value="1"/>
</dbReference>
<dbReference type="Pfam" id="PF00504">
    <property type="entry name" value="Chloroa_b-bind"/>
    <property type="match status" value="1"/>
</dbReference>
<dbReference type="SUPFAM" id="SSF103511">
    <property type="entry name" value="Chlorophyll a-b binding protein"/>
    <property type="match status" value="1"/>
</dbReference>
<organism>
    <name type="scientific">Macrocystis pyrifera</name>
    <name type="common">Giant kelp</name>
    <name type="synonym">Fucus pyrifer</name>
    <dbReference type="NCBI Taxonomy" id="35122"/>
    <lineage>
        <taxon>Eukaryota</taxon>
        <taxon>Sar</taxon>
        <taxon>Stramenopiles</taxon>
        <taxon>Ochrophyta</taxon>
        <taxon>PX clade</taxon>
        <taxon>Phaeophyceae</taxon>
        <taxon>Laminariales</taxon>
        <taxon>Laminariaceae</taxon>
        <taxon>Macrocystis</taxon>
    </lineage>
</organism>
<comment type="function">
    <text>The light-harvesting complex (LHC) functions as a light receptor, it captures and delivers excitation energy to photosystems with which it is closely associated. Energy is transferred from the carotenoid and chlorophyll C (or B) to chlorophyll A and the photosynthetic reaction centers where it is used to synthesize ATP and reducing power.</text>
</comment>
<comment type="subunit">
    <text>The LHC complex of chromophytic algae is composed of fucoxanthin, chlorophyll A and C bound non-covalently by fucoxanthin chlorophyll proteins (FCPs). The ratio of pigments in this LHC is; fucoxanthin: chlorophyll C: chlorophyll A; (0.6-1): (0.1-0.3): (1).</text>
</comment>
<comment type="subcellular location">
    <subcellularLocation>
        <location>Plastid</location>
        <location>Chloroplast thylakoid membrane</location>
        <topology>Multi-pass membrane protein</topology>
    </subcellularLocation>
    <text>FCPs are probably transported across the endoplasmic reticulum membranes that surround the plastid via a signal peptide, followed by translocation across the thylakoid membrane via a transit peptide.</text>
</comment>
<comment type="induction">
    <text>Levels are increased twofold when transferred from high intensity to low intensity blue or white light.</text>
</comment>
<comment type="similarity">
    <text evidence="2">Belongs to the fucoxanthin chlorophyll protein family.</text>
</comment>
<proteinExistence type="evidence at transcript level"/>
<gene>
    <name type="primary">FCPB</name>
</gene>
<evidence type="ECO:0000255" key="1"/>
<evidence type="ECO:0000305" key="2"/>
<keyword id="KW-0148">Chlorophyll</keyword>
<keyword id="KW-0150">Chloroplast</keyword>
<keyword id="KW-0157">Chromophore</keyword>
<keyword id="KW-0437">Light-harvesting polypeptide</keyword>
<keyword id="KW-0472">Membrane</keyword>
<keyword id="KW-0602">Photosynthesis</keyword>
<keyword id="KW-0604">Photosystem II</keyword>
<keyword id="KW-0934">Plastid</keyword>
<keyword id="KW-0793">Thylakoid</keyword>
<keyword id="KW-0809">Transit peptide</keyword>
<keyword id="KW-0812">Transmembrane</keyword>
<keyword id="KW-1133">Transmembrane helix</keyword>
<name>FCPB_MACPY</name>